<reference key="1">
    <citation type="journal article" date="2008" name="BMC Genomics">
        <title>The missing link: Bordetella petrii is endowed with both the metabolic versatility of environmental bacteria and virulence traits of pathogenic Bordetellae.</title>
        <authorList>
            <person name="Gross R."/>
            <person name="Guzman C.A."/>
            <person name="Sebaihia M."/>
            <person name="Martin dos Santos V.A.P."/>
            <person name="Pieper D.H."/>
            <person name="Koebnik R."/>
            <person name="Lechner M."/>
            <person name="Bartels D."/>
            <person name="Buhrmester J."/>
            <person name="Choudhuri J.V."/>
            <person name="Ebensen T."/>
            <person name="Gaigalat L."/>
            <person name="Herrmann S."/>
            <person name="Khachane A.N."/>
            <person name="Larisch C."/>
            <person name="Link S."/>
            <person name="Linke B."/>
            <person name="Meyer F."/>
            <person name="Mormann S."/>
            <person name="Nakunst D."/>
            <person name="Rueckert C."/>
            <person name="Schneiker-Bekel S."/>
            <person name="Schulze K."/>
            <person name="Voerholter F.-J."/>
            <person name="Yevsa T."/>
            <person name="Engle J.T."/>
            <person name="Goldman W.E."/>
            <person name="Puehler A."/>
            <person name="Goebel U.B."/>
            <person name="Goesmann A."/>
            <person name="Bloecker H."/>
            <person name="Kaiser O."/>
            <person name="Martinez-Arias R."/>
        </authorList>
    </citation>
    <scope>NUCLEOTIDE SEQUENCE [LARGE SCALE GENOMIC DNA]</scope>
    <source>
        <strain>ATCC BAA-461 / DSM 12804 / CCUG 43448</strain>
    </source>
</reference>
<comment type="function">
    <text evidence="1">Plays an essential role in the initiation and regulation of chromosomal replication. ATP-DnaA binds to the origin of replication (oriC) to initiate formation of the DNA replication initiation complex once per cell cycle. Binds the DnaA box (a 9 base pair repeat at the origin) and separates the double-stranded (ds)DNA. Forms a right-handed helical filament on oriC DNA; dsDNA binds to the exterior of the filament while single-stranded (ss)DNA is stabiized in the filament's interior. The ATP-DnaA-oriC complex binds and stabilizes one strand of the AT-rich DNA unwinding element (DUE), permitting loading of DNA polymerase. After initiation quickly degrades to an ADP-DnaA complex that is not apt for DNA replication. Binds acidic phospholipids.</text>
</comment>
<comment type="subunit">
    <text evidence="1">Oligomerizes as a right-handed, spiral filament on DNA at oriC.</text>
</comment>
<comment type="subcellular location">
    <subcellularLocation>
        <location evidence="1">Cytoplasm</location>
    </subcellularLocation>
</comment>
<comment type="domain">
    <text evidence="1">Domain I is involved in oligomerization and binding regulators, domain II is flexibile and of varying length in different bacteria, domain III forms the AAA+ region, while domain IV binds dsDNA.</text>
</comment>
<comment type="similarity">
    <text evidence="1">Belongs to the DnaA family.</text>
</comment>
<evidence type="ECO:0000255" key="1">
    <source>
        <dbReference type="HAMAP-Rule" id="MF_00377"/>
    </source>
</evidence>
<dbReference type="EMBL" id="AM902716">
    <property type="protein sequence ID" value="CAP40332.1"/>
    <property type="molecule type" value="Genomic_DNA"/>
</dbReference>
<dbReference type="SMR" id="A9HVA1"/>
<dbReference type="STRING" id="94624.Bpet0001"/>
<dbReference type="KEGG" id="bpt:Bpet0001"/>
<dbReference type="eggNOG" id="COG0593">
    <property type="taxonomic scope" value="Bacteria"/>
</dbReference>
<dbReference type="Proteomes" id="UP000001225">
    <property type="component" value="Chromosome"/>
</dbReference>
<dbReference type="GO" id="GO:0005737">
    <property type="term" value="C:cytoplasm"/>
    <property type="evidence" value="ECO:0007669"/>
    <property type="project" value="UniProtKB-SubCell"/>
</dbReference>
<dbReference type="GO" id="GO:0005886">
    <property type="term" value="C:plasma membrane"/>
    <property type="evidence" value="ECO:0007669"/>
    <property type="project" value="TreeGrafter"/>
</dbReference>
<dbReference type="GO" id="GO:0005524">
    <property type="term" value="F:ATP binding"/>
    <property type="evidence" value="ECO:0007669"/>
    <property type="project" value="UniProtKB-UniRule"/>
</dbReference>
<dbReference type="GO" id="GO:0016887">
    <property type="term" value="F:ATP hydrolysis activity"/>
    <property type="evidence" value="ECO:0007669"/>
    <property type="project" value="InterPro"/>
</dbReference>
<dbReference type="GO" id="GO:0003688">
    <property type="term" value="F:DNA replication origin binding"/>
    <property type="evidence" value="ECO:0007669"/>
    <property type="project" value="UniProtKB-UniRule"/>
</dbReference>
<dbReference type="GO" id="GO:0008289">
    <property type="term" value="F:lipid binding"/>
    <property type="evidence" value="ECO:0007669"/>
    <property type="project" value="UniProtKB-KW"/>
</dbReference>
<dbReference type="GO" id="GO:0006270">
    <property type="term" value="P:DNA replication initiation"/>
    <property type="evidence" value="ECO:0007669"/>
    <property type="project" value="UniProtKB-UniRule"/>
</dbReference>
<dbReference type="GO" id="GO:0006275">
    <property type="term" value="P:regulation of DNA replication"/>
    <property type="evidence" value="ECO:0007669"/>
    <property type="project" value="UniProtKB-UniRule"/>
</dbReference>
<dbReference type="CDD" id="cd00009">
    <property type="entry name" value="AAA"/>
    <property type="match status" value="1"/>
</dbReference>
<dbReference type="CDD" id="cd06571">
    <property type="entry name" value="Bac_DnaA_C"/>
    <property type="match status" value="1"/>
</dbReference>
<dbReference type="FunFam" id="1.10.8.60:FF:000003">
    <property type="entry name" value="Chromosomal replication initiator protein DnaA"/>
    <property type="match status" value="1"/>
</dbReference>
<dbReference type="FunFam" id="3.40.50.300:FF:000668">
    <property type="entry name" value="Chromosomal replication initiator protein DnaA"/>
    <property type="match status" value="1"/>
</dbReference>
<dbReference type="Gene3D" id="1.10.1750.10">
    <property type="match status" value="1"/>
</dbReference>
<dbReference type="Gene3D" id="1.10.8.60">
    <property type="match status" value="1"/>
</dbReference>
<dbReference type="Gene3D" id="3.30.300.180">
    <property type="match status" value="1"/>
</dbReference>
<dbReference type="Gene3D" id="3.40.50.300">
    <property type="entry name" value="P-loop containing nucleotide triphosphate hydrolases"/>
    <property type="match status" value="1"/>
</dbReference>
<dbReference type="HAMAP" id="MF_00377">
    <property type="entry name" value="DnaA_bact"/>
    <property type="match status" value="1"/>
</dbReference>
<dbReference type="InterPro" id="IPR003593">
    <property type="entry name" value="AAA+_ATPase"/>
</dbReference>
<dbReference type="InterPro" id="IPR001957">
    <property type="entry name" value="Chromosome_initiator_DnaA"/>
</dbReference>
<dbReference type="InterPro" id="IPR020591">
    <property type="entry name" value="Chromosome_initiator_DnaA-like"/>
</dbReference>
<dbReference type="InterPro" id="IPR018312">
    <property type="entry name" value="Chromosome_initiator_DnaA_CS"/>
</dbReference>
<dbReference type="InterPro" id="IPR013159">
    <property type="entry name" value="DnaA_C"/>
</dbReference>
<dbReference type="InterPro" id="IPR013317">
    <property type="entry name" value="DnaA_dom"/>
</dbReference>
<dbReference type="InterPro" id="IPR024633">
    <property type="entry name" value="DnaA_N_dom"/>
</dbReference>
<dbReference type="InterPro" id="IPR038454">
    <property type="entry name" value="DnaA_N_sf"/>
</dbReference>
<dbReference type="InterPro" id="IPR027417">
    <property type="entry name" value="P-loop_NTPase"/>
</dbReference>
<dbReference type="InterPro" id="IPR010921">
    <property type="entry name" value="Trp_repressor/repl_initiator"/>
</dbReference>
<dbReference type="NCBIfam" id="TIGR00362">
    <property type="entry name" value="DnaA"/>
    <property type="match status" value="1"/>
</dbReference>
<dbReference type="PANTHER" id="PTHR30050">
    <property type="entry name" value="CHROMOSOMAL REPLICATION INITIATOR PROTEIN DNAA"/>
    <property type="match status" value="1"/>
</dbReference>
<dbReference type="PANTHER" id="PTHR30050:SF2">
    <property type="entry name" value="CHROMOSOMAL REPLICATION INITIATOR PROTEIN DNAA"/>
    <property type="match status" value="1"/>
</dbReference>
<dbReference type="Pfam" id="PF00308">
    <property type="entry name" value="Bac_DnaA"/>
    <property type="match status" value="1"/>
</dbReference>
<dbReference type="Pfam" id="PF08299">
    <property type="entry name" value="Bac_DnaA_C"/>
    <property type="match status" value="1"/>
</dbReference>
<dbReference type="Pfam" id="PF11638">
    <property type="entry name" value="DnaA_N"/>
    <property type="match status" value="1"/>
</dbReference>
<dbReference type="PRINTS" id="PR00051">
    <property type="entry name" value="DNAA"/>
</dbReference>
<dbReference type="SMART" id="SM00382">
    <property type="entry name" value="AAA"/>
    <property type="match status" value="1"/>
</dbReference>
<dbReference type="SMART" id="SM00760">
    <property type="entry name" value="Bac_DnaA_C"/>
    <property type="match status" value="1"/>
</dbReference>
<dbReference type="SUPFAM" id="SSF52540">
    <property type="entry name" value="P-loop containing nucleoside triphosphate hydrolases"/>
    <property type="match status" value="1"/>
</dbReference>
<dbReference type="SUPFAM" id="SSF48295">
    <property type="entry name" value="TrpR-like"/>
    <property type="match status" value="1"/>
</dbReference>
<dbReference type="PROSITE" id="PS01008">
    <property type="entry name" value="DNAA"/>
    <property type="match status" value="1"/>
</dbReference>
<proteinExistence type="inferred from homology"/>
<sequence length="478" mass="52715">MKEFWQTCVSRLEQELPPQQISAWIRPLVPLAYDETQAVLRVAAPNRFKLDWVRKNFSHQIEALAAEWFQRPVQVAFELPAGGAGPRMPAVPRTPAGAPAPVSAGMAATPAGAPAQAPVAPAAVAAAVQADAAGVVYERSRLNTDLTFDNFVTGKANQLARAAALQVAENPGISYNPLFLYGGVGLGKTHLIHAIGNAMVAAGTGVRVRYVHADQYVSDVVKAYQRKAFDDFKRYYHSLDLLLIDDIQFFSGKSRTQEEFFYAFEAMVAQRKQIIITSDTYPKELAGIDSRLISRFDSGLTVAIEPPELEMRVAILLRKAESEGVPMPEEVAFFIAKHLRSNVRELEGALRKVLAYARFHGRDVLSVDVCKEALKDLLSVSNGQITVENIQKTVADFYKIKVADMYSKRRPANIALPRQVAMYLAKELTQKSLPEIGDLFGGRDHTTVLHAVRKISDARAKQAELNHTLHVLEQTLKG</sequence>
<organism>
    <name type="scientific">Bordetella petrii (strain ATCC BAA-461 / DSM 12804 / CCUG 43448)</name>
    <dbReference type="NCBI Taxonomy" id="340100"/>
    <lineage>
        <taxon>Bacteria</taxon>
        <taxon>Pseudomonadati</taxon>
        <taxon>Pseudomonadota</taxon>
        <taxon>Betaproteobacteria</taxon>
        <taxon>Burkholderiales</taxon>
        <taxon>Alcaligenaceae</taxon>
        <taxon>Bordetella</taxon>
    </lineage>
</organism>
<keyword id="KW-0067">ATP-binding</keyword>
<keyword id="KW-0963">Cytoplasm</keyword>
<keyword id="KW-0235">DNA replication</keyword>
<keyword id="KW-0238">DNA-binding</keyword>
<keyword id="KW-0446">Lipid-binding</keyword>
<keyword id="KW-0547">Nucleotide-binding</keyword>
<protein>
    <recommendedName>
        <fullName evidence="1">Chromosomal replication initiator protein DnaA</fullName>
    </recommendedName>
</protein>
<accession>A9HVA1</accession>
<gene>
    <name evidence="1" type="primary">dnaA</name>
    <name type="ordered locus">Bpet0001</name>
</gene>
<feature type="chain" id="PRO_1000121953" description="Chromosomal replication initiator protein DnaA">
    <location>
        <begin position="1"/>
        <end position="478"/>
    </location>
</feature>
<feature type="region of interest" description="Domain I, interacts with DnaA modulators" evidence="1">
    <location>
        <begin position="1"/>
        <end position="71"/>
    </location>
</feature>
<feature type="region of interest" description="Domain II" evidence="1">
    <location>
        <begin position="71"/>
        <end position="140"/>
    </location>
</feature>
<feature type="region of interest" description="Domain III, AAA+ region" evidence="1">
    <location>
        <begin position="141"/>
        <end position="357"/>
    </location>
</feature>
<feature type="region of interest" description="Domain IV, binds dsDNA" evidence="1">
    <location>
        <begin position="358"/>
        <end position="478"/>
    </location>
</feature>
<feature type="binding site" evidence="1">
    <location>
        <position position="185"/>
    </location>
    <ligand>
        <name>ATP</name>
        <dbReference type="ChEBI" id="CHEBI:30616"/>
    </ligand>
</feature>
<feature type="binding site" evidence="1">
    <location>
        <position position="187"/>
    </location>
    <ligand>
        <name>ATP</name>
        <dbReference type="ChEBI" id="CHEBI:30616"/>
    </ligand>
</feature>
<feature type="binding site" evidence="1">
    <location>
        <position position="188"/>
    </location>
    <ligand>
        <name>ATP</name>
        <dbReference type="ChEBI" id="CHEBI:30616"/>
    </ligand>
</feature>
<feature type="binding site" evidence="1">
    <location>
        <position position="189"/>
    </location>
    <ligand>
        <name>ATP</name>
        <dbReference type="ChEBI" id="CHEBI:30616"/>
    </ligand>
</feature>
<name>DNAA_BORPD</name>